<organism>
    <name type="scientific">Salmonella paratyphi A (strain ATCC 9150 / SARB42)</name>
    <dbReference type="NCBI Taxonomy" id="295319"/>
    <lineage>
        <taxon>Bacteria</taxon>
        <taxon>Pseudomonadati</taxon>
        <taxon>Pseudomonadota</taxon>
        <taxon>Gammaproteobacteria</taxon>
        <taxon>Enterobacterales</taxon>
        <taxon>Enterobacteriaceae</taxon>
        <taxon>Salmonella</taxon>
    </lineage>
</organism>
<evidence type="ECO:0000255" key="1">
    <source>
        <dbReference type="HAMAP-Rule" id="MF_00532"/>
    </source>
</evidence>
<evidence type="ECO:0000305" key="2"/>
<name>RS9_SALPA</name>
<keyword id="KW-0687">Ribonucleoprotein</keyword>
<keyword id="KW-0689">Ribosomal protein</keyword>
<comment type="similarity">
    <text evidence="1">Belongs to the universal ribosomal protein uS9 family.</text>
</comment>
<feature type="chain" id="PRO_1000051316" description="Small ribosomal subunit protein uS9">
    <location>
        <begin position="1"/>
        <end position="130"/>
    </location>
</feature>
<protein>
    <recommendedName>
        <fullName evidence="1">Small ribosomal subunit protein uS9</fullName>
    </recommendedName>
    <alternativeName>
        <fullName evidence="2">30S ribosomal protein S9</fullName>
    </alternativeName>
</protein>
<gene>
    <name evidence="1" type="primary">rpsI</name>
    <name type="ordered locus">SPA3211</name>
</gene>
<dbReference type="EMBL" id="CP000026">
    <property type="protein sequence ID" value="AAV79035.1"/>
    <property type="molecule type" value="Genomic_DNA"/>
</dbReference>
<dbReference type="RefSeq" id="WP_000829815.1">
    <property type="nucleotide sequence ID" value="NC_006511.1"/>
</dbReference>
<dbReference type="SMR" id="Q5PJS6"/>
<dbReference type="GeneID" id="97393262"/>
<dbReference type="KEGG" id="spt:SPA3211"/>
<dbReference type="HOGENOM" id="CLU_046483_2_1_6"/>
<dbReference type="Proteomes" id="UP000008185">
    <property type="component" value="Chromosome"/>
</dbReference>
<dbReference type="GO" id="GO:0022627">
    <property type="term" value="C:cytosolic small ribosomal subunit"/>
    <property type="evidence" value="ECO:0007669"/>
    <property type="project" value="TreeGrafter"/>
</dbReference>
<dbReference type="GO" id="GO:0003723">
    <property type="term" value="F:RNA binding"/>
    <property type="evidence" value="ECO:0007669"/>
    <property type="project" value="TreeGrafter"/>
</dbReference>
<dbReference type="GO" id="GO:0003735">
    <property type="term" value="F:structural constituent of ribosome"/>
    <property type="evidence" value="ECO:0007669"/>
    <property type="project" value="InterPro"/>
</dbReference>
<dbReference type="GO" id="GO:0006412">
    <property type="term" value="P:translation"/>
    <property type="evidence" value="ECO:0007669"/>
    <property type="project" value="UniProtKB-UniRule"/>
</dbReference>
<dbReference type="FunFam" id="3.30.230.10:FF:000001">
    <property type="entry name" value="30S ribosomal protein S9"/>
    <property type="match status" value="1"/>
</dbReference>
<dbReference type="Gene3D" id="3.30.230.10">
    <property type="match status" value="1"/>
</dbReference>
<dbReference type="HAMAP" id="MF_00532_B">
    <property type="entry name" value="Ribosomal_uS9_B"/>
    <property type="match status" value="1"/>
</dbReference>
<dbReference type="InterPro" id="IPR020568">
    <property type="entry name" value="Ribosomal_Su5_D2-typ_SF"/>
</dbReference>
<dbReference type="InterPro" id="IPR000754">
    <property type="entry name" value="Ribosomal_uS9"/>
</dbReference>
<dbReference type="InterPro" id="IPR023035">
    <property type="entry name" value="Ribosomal_uS9_bac/plastid"/>
</dbReference>
<dbReference type="InterPro" id="IPR020574">
    <property type="entry name" value="Ribosomal_uS9_CS"/>
</dbReference>
<dbReference type="InterPro" id="IPR014721">
    <property type="entry name" value="Ribsml_uS5_D2-typ_fold_subgr"/>
</dbReference>
<dbReference type="NCBIfam" id="NF001099">
    <property type="entry name" value="PRK00132.1"/>
    <property type="match status" value="1"/>
</dbReference>
<dbReference type="PANTHER" id="PTHR21569">
    <property type="entry name" value="RIBOSOMAL PROTEIN S9"/>
    <property type="match status" value="1"/>
</dbReference>
<dbReference type="PANTHER" id="PTHR21569:SF1">
    <property type="entry name" value="SMALL RIBOSOMAL SUBUNIT PROTEIN US9M"/>
    <property type="match status" value="1"/>
</dbReference>
<dbReference type="Pfam" id="PF00380">
    <property type="entry name" value="Ribosomal_S9"/>
    <property type="match status" value="1"/>
</dbReference>
<dbReference type="SUPFAM" id="SSF54211">
    <property type="entry name" value="Ribosomal protein S5 domain 2-like"/>
    <property type="match status" value="1"/>
</dbReference>
<dbReference type="PROSITE" id="PS00360">
    <property type="entry name" value="RIBOSOMAL_S9"/>
    <property type="match status" value="1"/>
</dbReference>
<sequence>MAENQYYGTGRRKSSAARVFIKPGNGKIVINQRSLEQYFGRETARMVVRQPLELVDMVEKLDLYITVKGGGISGQAGAIRHGITRALMEYDESLRGELRKAGFVTRDARQVERKKVGLRKARRRPQFSKR</sequence>
<accession>Q5PJS6</accession>
<proteinExistence type="inferred from homology"/>
<reference key="1">
    <citation type="journal article" date="2004" name="Nat. Genet.">
        <title>Comparison of genome degradation in Paratyphi A and Typhi, human-restricted serovars of Salmonella enterica that cause typhoid.</title>
        <authorList>
            <person name="McClelland M."/>
            <person name="Sanderson K.E."/>
            <person name="Clifton S.W."/>
            <person name="Latreille P."/>
            <person name="Porwollik S."/>
            <person name="Sabo A."/>
            <person name="Meyer R."/>
            <person name="Bieri T."/>
            <person name="Ozersky P."/>
            <person name="McLellan M."/>
            <person name="Harkins C.R."/>
            <person name="Wang C."/>
            <person name="Nguyen C."/>
            <person name="Berghoff A."/>
            <person name="Elliott G."/>
            <person name="Kohlberg S."/>
            <person name="Strong C."/>
            <person name="Du F."/>
            <person name="Carter J."/>
            <person name="Kremizki C."/>
            <person name="Layman D."/>
            <person name="Leonard S."/>
            <person name="Sun H."/>
            <person name="Fulton L."/>
            <person name="Nash W."/>
            <person name="Miner T."/>
            <person name="Minx P."/>
            <person name="Delehaunty K."/>
            <person name="Fronick C."/>
            <person name="Magrini V."/>
            <person name="Nhan M."/>
            <person name="Warren W."/>
            <person name="Florea L."/>
            <person name="Spieth J."/>
            <person name="Wilson R.K."/>
        </authorList>
    </citation>
    <scope>NUCLEOTIDE SEQUENCE [LARGE SCALE GENOMIC DNA]</scope>
    <source>
        <strain>ATCC 9150 / SARB42</strain>
    </source>
</reference>